<dbReference type="EMBL" id="Z36051">
    <property type="protein sequence ID" value="CAA85143.1"/>
    <property type="molecule type" value="Genomic_DNA"/>
</dbReference>
<dbReference type="EMBL" id="AY693072">
    <property type="protein sequence ID" value="AAT93091.1"/>
    <property type="molecule type" value="Genomic_DNA"/>
</dbReference>
<dbReference type="EMBL" id="U02073">
    <property type="protein sequence ID" value="AAB60287.1"/>
    <property type="molecule type" value="Genomic_DNA"/>
</dbReference>
<dbReference type="EMBL" id="BK006936">
    <property type="protein sequence ID" value="DAA07296.1"/>
    <property type="molecule type" value="Genomic_DNA"/>
</dbReference>
<dbReference type="PIR" id="S46054">
    <property type="entry name" value="S46054"/>
</dbReference>
<dbReference type="RefSeq" id="NP_009741.3">
    <property type="nucleotide sequence ID" value="NM_001178530.3"/>
</dbReference>
<dbReference type="SMR" id="P38128"/>
<dbReference type="BioGRID" id="32880">
    <property type="interactions" value="115"/>
</dbReference>
<dbReference type="FunCoup" id="P38128">
    <property type="interactions" value="493"/>
</dbReference>
<dbReference type="IntAct" id="P38128">
    <property type="interactions" value="4"/>
</dbReference>
<dbReference type="MINT" id="P38128"/>
<dbReference type="STRING" id="4932.YBR182C"/>
<dbReference type="iPTMnet" id="P38128"/>
<dbReference type="PaxDb" id="4932-YBR182C"/>
<dbReference type="PeptideAtlas" id="P38128"/>
<dbReference type="EnsemblFungi" id="YBR182C_mRNA">
    <property type="protein sequence ID" value="YBR182C"/>
    <property type="gene ID" value="YBR182C"/>
</dbReference>
<dbReference type="GeneID" id="852480"/>
<dbReference type="KEGG" id="sce:YBR182C"/>
<dbReference type="AGR" id="SGD:S000000386"/>
<dbReference type="SGD" id="S000000386">
    <property type="gene designation" value="SMP1"/>
</dbReference>
<dbReference type="VEuPathDB" id="FungiDB:YBR182C"/>
<dbReference type="eggNOG" id="KOG0014">
    <property type="taxonomic scope" value="Eukaryota"/>
</dbReference>
<dbReference type="GeneTree" id="ENSGT00940000169350"/>
<dbReference type="HOGENOM" id="CLU_605820_0_0_1"/>
<dbReference type="InParanoid" id="P38128"/>
<dbReference type="OMA" id="ATNDACQ"/>
<dbReference type="OrthoDB" id="1898716at2759"/>
<dbReference type="BioCyc" id="YEAST:G3O-29126-MONOMER"/>
<dbReference type="Reactome" id="R-SCE-525793">
    <property type="pathway name" value="Myogenesis"/>
</dbReference>
<dbReference type="BioGRID-ORCS" id="852480">
    <property type="hits" value="1 hit in 13 CRISPR screens"/>
</dbReference>
<dbReference type="PRO" id="PR:P38128"/>
<dbReference type="Proteomes" id="UP000002311">
    <property type="component" value="Chromosome II"/>
</dbReference>
<dbReference type="RNAct" id="P38128">
    <property type="molecule type" value="protein"/>
</dbReference>
<dbReference type="GO" id="GO:0005737">
    <property type="term" value="C:cytoplasm"/>
    <property type="evidence" value="ECO:0000314"/>
    <property type="project" value="SGD"/>
</dbReference>
<dbReference type="GO" id="GO:0005634">
    <property type="term" value="C:nucleus"/>
    <property type="evidence" value="ECO:0000314"/>
    <property type="project" value="SGD"/>
</dbReference>
<dbReference type="GO" id="GO:0008301">
    <property type="term" value="F:DNA binding, bending"/>
    <property type="evidence" value="ECO:0000314"/>
    <property type="project" value="SGD"/>
</dbReference>
<dbReference type="GO" id="GO:0000981">
    <property type="term" value="F:DNA-binding transcription factor activity, RNA polymerase II-specific"/>
    <property type="evidence" value="ECO:0000318"/>
    <property type="project" value="GO_Central"/>
</dbReference>
<dbReference type="GO" id="GO:0046983">
    <property type="term" value="F:protein dimerization activity"/>
    <property type="evidence" value="ECO:0007669"/>
    <property type="project" value="InterPro"/>
</dbReference>
<dbReference type="GO" id="GO:0000978">
    <property type="term" value="F:RNA polymerase II cis-regulatory region sequence-specific DNA binding"/>
    <property type="evidence" value="ECO:0000318"/>
    <property type="project" value="GO_Central"/>
</dbReference>
<dbReference type="GO" id="GO:0043565">
    <property type="term" value="F:sequence-specific DNA binding"/>
    <property type="evidence" value="ECO:0000314"/>
    <property type="project" value="SGD"/>
</dbReference>
<dbReference type="GO" id="GO:0071470">
    <property type="term" value="P:cellular response to osmotic stress"/>
    <property type="evidence" value="ECO:0000315"/>
    <property type="project" value="SGD"/>
</dbReference>
<dbReference type="GO" id="GO:0045944">
    <property type="term" value="P:positive regulation of transcription by RNA polymerase II"/>
    <property type="evidence" value="ECO:0000315"/>
    <property type="project" value="SGD"/>
</dbReference>
<dbReference type="CDD" id="cd00265">
    <property type="entry name" value="MADS_MEF2_like"/>
    <property type="match status" value="1"/>
</dbReference>
<dbReference type="FunFam" id="3.40.1810.10:FF:000013">
    <property type="entry name" value="Transcription factor, MADS-box"/>
    <property type="match status" value="1"/>
</dbReference>
<dbReference type="Gene3D" id="3.40.1810.10">
    <property type="entry name" value="Transcription factor, MADS-box"/>
    <property type="match status" value="1"/>
</dbReference>
<dbReference type="InterPro" id="IPR033896">
    <property type="entry name" value="MEF2-like_N"/>
</dbReference>
<dbReference type="InterPro" id="IPR002100">
    <property type="entry name" value="TF_MADSbox"/>
</dbReference>
<dbReference type="InterPro" id="IPR036879">
    <property type="entry name" value="TF_MADSbox_sf"/>
</dbReference>
<dbReference type="PANTHER" id="PTHR11945">
    <property type="entry name" value="MADS BOX PROTEIN"/>
    <property type="match status" value="1"/>
</dbReference>
<dbReference type="PANTHER" id="PTHR11945:SF534">
    <property type="entry name" value="MYOCYTE-SPECIFIC ENHANCER FACTOR 2"/>
    <property type="match status" value="1"/>
</dbReference>
<dbReference type="Pfam" id="PF00319">
    <property type="entry name" value="SRF-TF"/>
    <property type="match status" value="1"/>
</dbReference>
<dbReference type="PRINTS" id="PR00404">
    <property type="entry name" value="MADSDOMAIN"/>
</dbReference>
<dbReference type="SMART" id="SM00432">
    <property type="entry name" value="MADS"/>
    <property type="match status" value="1"/>
</dbReference>
<dbReference type="SUPFAM" id="SSF55455">
    <property type="entry name" value="SRF-like"/>
    <property type="match status" value="1"/>
</dbReference>
<dbReference type="PROSITE" id="PS00350">
    <property type="entry name" value="MADS_BOX_1"/>
    <property type="match status" value="1"/>
</dbReference>
<dbReference type="PROSITE" id="PS50066">
    <property type="entry name" value="MADS_BOX_2"/>
    <property type="match status" value="1"/>
</dbReference>
<feature type="chain" id="PRO_0000199441" description="Transcription factor SMP1">
    <location>
        <begin position="1"/>
        <end position="452"/>
    </location>
</feature>
<feature type="domain" description="MADS-box" evidence="2">
    <location>
        <begin position="3"/>
        <end position="57"/>
    </location>
</feature>
<feature type="DNA-binding region" description="Mef2-type" evidence="1">
    <location>
        <begin position="58"/>
        <end position="87"/>
    </location>
</feature>
<feature type="region of interest" description="Disordered" evidence="3">
    <location>
        <begin position="97"/>
        <end position="142"/>
    </location>
</feature>
<feature type="compositionally biased region" description="Low complexity" evidence="3">
    <location>
        <begin position="115"/>
        <end position="127"/>
    </location>
</feature>
<keyword id="KW-0238">DNA-binding</keyword>
<keyword id="KW-0539">Nucleus</keyword>
<keyword id="KW-1185">Reference proteome</keyword>
<keyword id="KW-0804">Transcription</keyword>
<keyword id="KW-0805">Transcription regulation</keyword>
<sequence>MGRRKIEIEPIKDDRNRTVTFIKRKAGLFKKAHELSVLCQVDIAVIILGSNNTFYEYSSVDMSNLLNVHQNNTDLPHNIIEPSDYGDYVKKPRVVLNERKRRRRRATVLQPASHSGSCTVSSQDSSSVQNNGNLSAPLASNDAGNAGVSTPLVHCHGAISRSGSNHSDCARNSADYQMLQGGLNSGGSFHANDYKESVDQQHVANEAIHRNFMNKRIRPDTHLLLSESNHSNYHNFYPSPYENLPKPSLPASLVGNIPSFQSQFVQVIPANSNPMGKGFNGTGDSESFEAKQKIHPTVAISNTLEGPAPVQAMVHHLHQLNSNRGKLSGKPYLKLNIPKATNDACQRSPAMYSGTASPKTDVQATPNQMLASNMSSPLSRSKFLGFKNNDMDDLYHNGRCGSTYVNNKTFFLKPPIGRPPKFPKSPSSSIVVFPSSVASSTLKSTSSTNSPD</sequence>
<evidence type="ECO:0000255" key="1"/>
<evidence type="ECO:0000255" key="2">
    <source>
        <dbReference type="PROSITE-ProRule" id="PRU00251"/>
    </source>
</evidence>
<evidence type="ECO:0000256" key="3">
    <source>
        <dbReference type="SAM" id="MobiDB-lite"/>
    </source>
</evidence>
<evidence type="ECO:0000269" key="4">
    <source>
    </source>
</evidence>
<evidence type="ECO:0000305" key="5"/>
<organism>
    <name type="scientific">Saccharomyces cerevisiae (strain ATCC 204508 / S288c)</name>
    <name type="common">Baker's yeast</name>
    <dbReference type="NCBI Taxonomy" id="559292"/>
    <lineage>
        <taxon>Eukaryota</taxon>
        <taxon>Fungi</taxon>
        <taxon>Dikarya</taxon>
        <taxon>Ascomycota</taxon>
        <taxon>Saccharomycotina</taxon>
        <taxon>Saccharomycetes</taxon>
        <taxon>Saccharomycetales</taxon>
        <taxon>Saccharomycetaceae</taxon>
        <taxon>Saccharomyces</taxon>
    </lineage>
</organism>
<accession>P38128</accession>
<accession>D6VQH6</accession>
<name>SMP1_YEAST</name>
<reference key="1">
    <citation type="journal article" date="1994" name="EMBO J.">
        <title>Complete DNA sequence of yeast chromosome II.</title>
        <authorList>
            <person name="Feldmann H."/>
            <person name="Aigle M."/>
            <person name="Aljinovic G."/>
            <person name="Andre B."/>
            <person name="Baclet M.C."/>
            <person name="Barthe C."/>
            <person name="Baur A."/>
            <person name="Becam A.-M."/>
            <person name="Biteau N."/>
            <person name="Boles E."/>
            <person name="Brandt T."/>
            <person name="Brendel M."/>
            <person name="Brueckner M."/>
            <person name="Bussereau F."/>
            <person name="Christiansen C."/>
            <person name="Contreras R."/>
            <person name="Crouzet M."/>
            <person name="Cziepluch C."/>
            <person name="Demolis N."/>
            <person name="Delaveau T."/>
            <person name="Doignon F."/>
            <person name="Domdey H."/>
            <person name="Duesterhus S."/>
            <person name="Dubois E."/>
            <person name="Dujon B."/>
            <person name="El Bakkoury M."/>
            <person name="Entian K.-D."/>
            <person name="Feuermann M."/>
            <person name="Fiers W."/>
            <person name="Fobo G.M."/>
            <person name="Fritz C."/>
            <person name="Gassenhuber J."/>
            <person name="Glansdorff N."/>
            <person name="Goffeau A."/>
            <person name="Grivell L.A."/>
            <person name="de Haan M."/>
            <person name="Hein C."/>
            <person name="Herbert C.J."/>
            <person name="Hollenberg C.P."/>
            <person name="Holmstroem K."/>
            <person name="Jacq C."/>
            <person name="Jacquet M."/>
            <person name="Jauniaux J.-C."/>
            <person name="Jonniaux J.-L."/>
            <person name="Kallesoee T."/>
            <person name="Kiesau P."/>
            <person name="Kirchrath L."/>
            <person name="Koetter P."/>
            <person name="Korol S."/>
            <person name="Liebl S."/>
            <person name="Logghe M."/>
            <person name="Lohan A.J.E."/>
            <person name="Louis E.J."/>
            <person name="Li Z.Y."/>
            <person name="Maat M.J."/>
            <person name="Mallet L."/>
            <person name="Mannhaupt G."/>
            <person name="Messenguy F."/>
            <person name="Miosga T."/>
            <person name="Molemans F."/>
            <person name="Mueller S."/>
            <person name="Nasr F."/>
            <person name="Obermaier B."/>
            <person name="Perea J."/>
            <person name="Pierard A."/>
            <person name="Piravandi E."/>
            <person name="Pohl F.M."/>
            <person name="Pohl T.M."/>
            <person name="Potier S."/>
            <person name="Proft M."/>
            <person name="Purnelle B."/>
            <person name="Ramezani Rad M."/>
            <person name="Rieger M."/>
            <person name="Rose M."/>
            <person name="Schaaff-Gerstenschlaeger I."/>
            <person name="Scherens B."/>
            <person name="Schwarzlose C."/>
            <person name="Skala J."/>
            <person name="Slonimski P.P."/>
            <person name="Smits P.H.M."/>
            <person name="Souciet J.-L."/>
            <person name="Steensma H.Y."/>
            <person name="Stucka R."/>
            <person name="Urrestarazu L.A."/>
            <person name="van der Aart Q.J.M."/>
            <person name="Van Dyck L."/>
            <person name="Vassarotti A."/>
            <person name="Vetter I."/>
            <person name="Vierendeels F."/>
            <person name="Vissers S."/>
            <person name="Wagner G."/>
            <person name="de Wergifosse P."/>
            <person name="Wolfe K.H."/>
            <person name="Zagulski M."/>
            <person name="Zimmermann F.K."/>
            <person name="Mewes H.-W."/>
            <person name="Kleine K."/>
        </authorList>
    </citation>
    <scope>NUCLEOTIDE SEQUENCE [LARGE SCALE GENOMIC DNA]</scope>
    <source>
        <strain>ATCC 204508 / S288c</strain>
    </source>
</reference>
<reference key="2">
    <citation type="journal article" date="2014" name="G3 (Bethesda)">
        <title>The reference genome sequence of Saccharomyces cerevisiae: Then and now.</title>
        <authorList>
            <person name="Engel S.R."/>
            <person name="Dietrich F.S."/>
            <person name="Fisk D.G."/>
            <person name="Binkley G."/>
            <person name="Balakrishnan R."/>
            <person name="Costanzo M.C."/>
            <person name="Dwight S.S."/>
            <person name="Hitz B.C."/>
            <person name="Karra K."/>
            <person name="Nash R.S."/>
            <person name="Weng S."/>
            <person name="Wong E.D."/>
            <person name="Lloyd P."/>
            <person name="Skrzypek M.S."/>
            <person name="Miyasato S.R."/>
            <person name="Simison M."/>
            <person name="Cherry J.M."/>
        </authorList>
    </citation>
    <scope>GENOME REANNOTATION</scope>
    <source>
        <strain>ATCC 204508 / S288c</strain>
    </source>
</reference>
<reference key="3">
    <citation type="journal article" date="2007" name="Genome Res.">
        <title>Approaching a complete repository of sequence-verified protein-encoding clones for Saccharomyces cerevisiae.</title>
        <authorList>
            <person name="Hu Y."/>
            <person name="Rolfs A."/>
            <person name="Bhullar B."/>
            <person name="Murthy T.V.S."/>
            <person name="Zhu C."/>
            <person name="Berger M.F."/>
            <person name="Camargo A.A."/>
            <person name="Kelley F."/>
            <person name="McCarron S."/>
            <person name="Jepson D."/>
            <person name="Richardson A."/>
            <person name="Raphael J."/>
            <person name="Moreira D."/>
            <person name="Taycher E."/>
            <person name="Zuo D."/>
            <person name="Mohr S."/>
            <person name="Kane M.F."/>
            <person name="Williamson J."/>
            <person name="Simpson A.J.G."/>
            <person name="Bulyk M.L."/>
            <person name="Harlow E."/>
            <person name="Marsischky G."/>
            <person name="Kolodner R.D."/>
            <person name="LaBaer J."/>
        </authorList>
    </citation>
    <scope>NUCLEOTIDE SEQUENCE [GENOMIC DNA]</scope>
    <source>
        <strain>ATCC 204508 / S288c</strain>
    </source>
</reference>
<reference key="4">
    <citation type="journal article" date="1994" name="Yeast">
        <title>A 12.5 kb fragment of the yeast chromosome II contains two adjacent genes encoding ribosomal proteins and six putative new genes, one of which encodes a putative transcriptional factor.</title>
        <authorList>
            <person name="Demolis N."/>
            <person name="Jacquet M."/>
            <person name="Mallet L."/>
        </authorList>
    </citation>
    <scope>NUCLEOTIDE SEQUENCE [GENOMIC DNA] OF 1-242</scope>
    <source>
        <strain>ATCC 204508 / S288c</strain>
    </source>
</reference>
<reference key="5">
    <citation type="journal article" date="1997" name="Mol. Cell. Biol.">
        <title>The Saccharomyces cerevisiae MADS-box transcription factor Rlm1 is a target for the Mpk1 mitogen-activated protein kinase pathway.</title>
        <authorList>
            <person name="Dodou E."/>
            <person name="Treisman R."/>
        </authorList>
    </citation>
    <scope>CHARACTERIZATION</scope>
</reference>
<reference key="6">
    <citation type="journal article" date="2003" name="Mol. Cell. Biol.">
        <title>Targeting the MEF2-like transcription factor Smp1 by the stress-activated Hog1 mitogen-activated protein kinase.</title>
        <authorList>
            <person name="de Nadal E."/>
            <person name="Casadome L."/>
            <person name="Posas F."/>
        </authorList>
    </citation>
    <scope>FUNCTION</scope>
    <scope>PHOSPHORYLATION</scope>
    <scope>INTERACTION WITH HOG1</scope>
</reference>
<proteinExistence type="evidence at protein level"/>
<comment type="function">
    <text evidence="4">Transcription factor that controls part of the HOG1-mediated osmostress responses. Binds to the DNA sequence 5'-ACTACTA[TA](4)TAG-3'. Does not appear to function in the MPK1 pathway.</text>
</comment>
<comment type="subunit">
    <text evidence="4">Can heterodimerize with RLM1. Interacts with HOG1.</text>
</comment>
<comment type="subcellular location">
    <subcellularLocation>
        <location evidence="2">Nucleus</location>
    </subcellularLocation>
</comment>
<comment type="PTM">
    <text evidence="4">Phosphorylated by HOG1.</text>
</comment>
<comment type="similarity">
    <text evidence="5">Belongs to the MEF2 family.</text>
</comment>
<protein>
    <recommendedName>
        <fullName>Transcription factor SMP1</fullName>
    </recommendedName>
</protein>
<gene>
    <name type="primary">SMP1</name>
    <name type="ordered locus">YBR182C</name>
    <name type="ORF">YBR1245</name>
</gene>